<organism>
    <name type="scientific">Acinetobacter baumannii (strain SDF)</name>
    <dbReference type="NCBI Taxonomy" id="509170"/>
    <lineage>
        <taxon>Bacteria</taxon>
        <taxon>Pseudomonadati</taxon>
        <taxon>Pseudomonadota</taxon>
        <taxon>Gammaproteobacteria</taxon>
        <taxon>Moraxellales</taxon>
        <taxon>Moraxellaceae</taxon>
        <taxon>Acinetobacter</taxon>
        <taxon>Acinetobacter calcoaceticus/baumannii complex</taxon>
    </lineage>
</organism>
<comment type="catalytic activity">
    <reaction evidence="1">
        <text>tRNA(Leu) + L-leucine + ATP = L-leucyl-tRNA(Leu) + AMP + diphosphate</text>
        <dbReference type="Rhea" id="RHEA:11688"/>
        <dbReference type="Rhea" id="RHEA-COMP:9613"/>
        <dbReference type="Rhea" id="RHEA-COMP:9622"/>
        <dbReference type="ChEBI" id="CHEBI:30616"/>
        <dbReference type="ChEBI" id="CHEBI:33019"/>
        <dbReference type="ChEBI" id="CHEBI:57427"/>
        <dbReference type="ChEBI" id="CHEBI:78442"/>
        <dbReference type="ChEBI" id="CHEBI:78494"/>
        <dbReference type="ChEBI" id="CHEBI:456215"/>
        <dbReference type="EC" id="6.1.1.4"/>
    </reaction>
</comment>
<comment type="subcellular location">
    <subcellularLocation>
        <location evidence="1">Cytoplasm</location>
    </subcellularLocation>
</comment>
<comment type="similarity">
    <text evidence="1">Belongs to the class-I aminoacyl-tRNA synthetase family.</text>
</comment>
<feature type="chain" id="PRO_1000091280" description="Leucine--tRNA ligase">
    <location>
        <begin position="1"/>
        <end position="874"/>
    </location>
</feature>
<feature type="short sequence motif" description="'HIGH' region">
    <location>
        <begin position="47"/>
        <end position="57"/>
    </location>
</feature>
<feature type="short sequence motif" description="'KMSKS' region">
    <location>
        <begin position="636"/>
        <end position="640"/>
    </location>
</feature>
<feature type="binding site" evidence="1">
    <location>
        <position position="639"/>
    </location>
    <ligand>
        <name>ATP</name>
        <dbReference type="ChEBI" id="CHEBI:30616"/>
    </ligand>
</feature>
<reference key="1">
    <citation type="journal article" date="2008" name="PLoS ONE">
        <title>Comparative analysis of Acinetobacters: three genomes for three lifestyles.</title>
        <authorList>
            <person name="Vallenet D."/>
            <person name="Nordmann P."/>
            <person name="Barbe V."/>
            <person name="Poirel L."/>
            <person name="Mangenot S."/>
            <person name="Bataille E."/>
            <person name="Dossat C."/>
            <person name="Gas S."/>
            <person name="Kreimeyer A."/>
            <person name="Lenoble P."/>
            <person name="Oztas S."/>
            <person name="Poulain J."/>
            <person name="Segurens B."/>
            <person name="Robert C."/>
            <person name="Abergel C."/>
            <person name="Claverie J.-M."/>
            <person name="Raoult D."/>
            <person name="Medigue C."/>
            <person name="Weissenbach J."/>
            <person name="Cruveiller S."/>
        </authorList>
    </citation>
    <scope>NUCLEOTIDE SEQUENCE [LARGE SCALE GENOMIC DNA]</scope>
    <source>
        <strain>SDF</strain>
    </source>
</reference>
<keyword id="KW-0030">Aminoacyl-tRNA synthetase</keyword>
<keyword id="KW-0067">ATP-binding</keyword>
<keyword id="KW-0963">Cytoplasm</keyword>
<keyword id="KW-0436">Ligase</keyword>
<keyword id="KW-0547">Nucleotide-binding</keyword>
<keyword id="KW-0648">Protein biosynthesis</keyword>
<gene>
    <name evidence="1" type="primary">leuS</name>
    <name type="ordered locus">ABSDF2980</name>
</gene>
<protein>
    <recommendedName>
        <fullName evidence="1">Leucine--tRNA ligase</fullName>
        <ecNumber evidence="1">6.1.1.4</ecNumber>
    </recommendedName>
    <alternativeName>
        <fullName evidence="1">Leucyl-tRNA synthetase</fullName>
        <shortName evidence="1">LeuRS</shortName>
    </alternativeName>
</protein>
<evidence type="ECO:0000255" key="1">
    <source>
        <dbReference type="HAMAP-Rule" id="MF_00049"/>
    </source>
</evidence>
<dbReference type="EC" id="6.1.1.4" evidence="1"/>
<dbReference type="EMBL" id="CU468230">
    <property type="protein sequence ID" value="CAP02268.1"/>
    <property type="molecule type" value="Genomic_DNA"/>
</dbReference>
<dbReference type="SMR" id="B0VKP9"/>
<dbReference type="KEGG" id="abm:ABSDF2980"/>
<dbReference type="HOGENOM" id="CLU_004427_0_0_6"/>
<dbReference type="Proteomes" id="UP000001741">
    <property type="component" value="Chromosome"/>
</dbReference>
<dbReference type="GO" id="GO:0005829">
    <property type="term" value="C:cytosol"/>
    <property type="evidence" value="ECO:0007669"/>
    <property type="project" value="TreeGrafter"/>
</dbReference>
<dbReference type="GO" id="GO:0002161">
    <property type="term" value="F:aminoacyl-tRNA deacylase activity"/>
    <property type="evidence" value="ECO:0007669"/>
    <property type="project" value="InterPro"/>
</dbReference>
<dbReference type="GO" id="GO:0005524">
    <property type="term" value="F:ATP binding"/>
    <property type="evidence" value="ECO:0007669"/>
    <property type="project" value="UniProtKB-UniRule"/>
</dbReference>
<dbReference type="GO" id="GO:0004823">
    <property type="term" value="F:leucine-tRNA ligase activity"/>
    <property type="evidence" value="ECO:0007669"/>
    <property type="project" value="UniProtKB-UniRule"/>
</dbReference>
<dbReference type="GO" id="GO:0006429">
    <property type="term" value="P:leucyl-tRNA aminoacylation"/>
    <property type="evidence" value="ECO:0007669"/>
    <property type="project" value="UniProtKB-UniRule"/>
</dbReference>
<dbReference type="CDD" id="cd07958">
    <property type="entry name" value="Anticodon_Ia_Leu_BEm"/>
    <property type="match status" value="1"/>
</dbReference>
<dbReference type="CDD" id="cd00812">
    <property type="entry name" value="LeuRS_core"/>
    <property type="match status" value="1"/>
</dbReference>
<dbReference type="FunFam" id="1.10.730.10:FF:000003">
    <property type="entry name" value="Leucine--tRNA ligase"/>
    <property type="match status" value="1"/>
</dbReference>
<dbReference type="FunFam" id="2.20.28.290:FF:000001">
    <property type="entry name" value="Leucine--tRNA ligase"/>
    <property type="match status" value="1"/>
</dbReference>
<dbReference type="FunFam" id="3.40.50.620:FF:000003">
    <property type="entry name" value="Leucine--tRNA ligase"/>
    <property type="match status" value="1"/>
</dbReference>
<dbReference type="FunFam" id="3.40.50.620:FF:000124">
    <property type="entry name" value="Leucine--tRNA ligase"/>
    <property type="match status" value="1"/>
</dbReference>
<dbReference type="FunFam" id="3.90.740.10:FF:000012">
    <property type="entry name" value="Leucine--tRNA ligase"/>
    <property type="match status" value="1"/>
</dbReference>
<dbReference type="Gene3D" id="2.20.28.290">
    <property type="match status" value="1"/>
</dbReference>
<dbReference type="Gene3D" id="3.10.20.590">
    <property type="match status" value="1"/>
</dbReference>
<dbReference type="Gene3D" id="3.40.50.620">
    <property type="entry name" value="HUPs"/>
    <property type="match status" value="2"/>
</dbReference>
<dbReference type="Gene3D" id="1.10.730.10">
    <property type="entry name" value="Isoleucyl-tRNA Synthetase, Domain 1"/>
    <property type="match status" value="2"/>
</dbReference>
<dbReference type="Gene3D" id="3.90.740.10">
    <property type="entry name" value="Valyl/Leucyl/Isoleucyl-tRNA synthetase, editing domain"/>
    <property type="match status" value="1"/>
</dbReference>
<dbReference type="HAMAP" id="MF_00049_B">
    <property type="entry name" value="Leu_tRNA_synth_B"/>
    <property type="match status" value="1"/>
</dbReference>
<dbReference type="InterPro" id="IPR001412">
    <property type="entry name" value="aa-tRNA-synth_I_CS"/>
</dbReference>
<dbReference type="InterPro" id="IPR002300">
    <property type="entry name" value="aa-tRNA-synth_Ia"/>
</dbReference>
<dbReference type="InterPro" id="IPR002302">
    <property type="entry name" value="Leu-tRNA-ligase"/>
</dbReference>
<dbReference type="InterPro" id="IPR025709">
    <property type="entry name" value="Leu_tRNA-synth_edit"/>
</dbReference>
<dbReference type="InterPro" id="IPR013155">
    <property type="entry name" value="M/V/L/I-tRNA-synth_anticd-bd"/>
</dbReference>
<dbReference type="InterPro" id="IPR015413">
    <property type="entry name" value="Methionyl/Leucyl_tRNA_Synth"/>
</dbReference>
<dbReference type="InterPro" id="IPR014729">
    <property type="entry name" value="Rossmann-like_a/b/a_fold"/>
</dbReference>
<dbReference type="InterPro" id="IPR009080">
    <property type="entry name" value="tRNAsynth_Ia_anticodon-bd"/>
</dbReference>
<dbReference type="InterPro" id="IPR009008">
    <property type="entry name" value="Val/Leu/Ile-tRNA-synth_edit"/>
</dbReference>
<dbReference type="NCBIfam" id="TIGR00396">
    <property type="entry name" value="leuS_bact"/>
    <property type="match status" value="1"/>
</dbReference>
<dbReference type="PANTHER" id="PTHR43740:SF2">
    <property type="entry name" value="LEUCINE--TRNA LIGASE, MITOCHONDRIAL"/>
    <property type="match status" value="1"/>
</dbReference>
<dbReference type="PANTHER" id="PTHR43740">
    <property type="entry name" value="LEUCYL-TRNA SYNTHETASE"/>
    <property type="match status" value="1"/>
</dbReference>
<dbReference type="Pfam" id="PF08264">
    <property type="entry name" value="Anticodon_1"/>
    <property type="match status" value="1"/>
</dbReference>
<dbReference type="Pfam" id="PF00133">
    <property type="entry name" value="tRNA-synt_1"/>
    <property type="match status" value="1"/>
</dbReference>
<dbReference type="Pfam" id="PF13603">
    <property type="entry name" value="tRNA-synt_1_2"/>
    <property type="match status" value="1"/>
</dbReference>
<dbReference type="Pfam" id="PF09334">
    <property type="entry name" value="tRNA-synt_1g"/>
    <property type="match status" value="1"/>
</dbReference>
<dbReference type="PRINTS" id="PR00985">
    <property type="entry name" value="TRNASYNTHLEU"/>
</dbReference>
<dbReference type="SUPFAM" id="SSF47323">
    <property type="entry name" value="Anticodon-binding domain of a subclass of class I aminoacyl-tRNA synthetases"/>
    <property type="match status" value="1"/>
</dbReference>
<dbReference type="SUPFAM" id="SSF52374">
    <property type="entry name" value="Nucleotidylyl transferase"/>
    <property type="match status" value="1"/>
</dbReference>
<dbReference type="SUPFAM" id="SSF50677">
    <property type="entry name" value="ValRS/IleRS/LeuRS editing domain"/>
    <property type="match status" value="1"/>
</dbReference>
<dbReference type="PROSITE" id="PS00178">
    <property type="entry name" value="AA_TRNA_LIGASE_I"/>
    <property type="match status" value="1"/>
</dbReference>
<sequence>MTISHIDPEYQANTIEPSVQQDWENRKVFKVADTVEGKHRYILSMFPYPSGKLHMGHVRNYTIGDVISRFYRLKGETVLQPMGWDAFGLPAENAAIAHKVAPAKWTFENIAYMRDQLKKLGLSVDWDREFATCTPEYYHWEQWLFVQLYKKGLIYRKLSTVNWDPVDQTVLANEQVENGRGWRSGALVEKRDIPMYYFRITDYAQELLDDLDTLQDGWPQQVLTMQRNWIGRSTGMEITFPSANTEIYADGLTVYTTRADTLMGVTYVAVAAEHPLALKAAENNPELAAFIEECRIGSVAEADLATAEKKGMATGLFVKHPVTGEELPVWIANYVLMSYGSGAVMAVPAHDERDFEFANKFNLPIKQVIDAKGADDADYSATEWQEWYGSKEGKLVNSGEFDGLEFQAAFDAFLAKLEPQGLANSKVQFRLRDWGVSRQRYWGCPIPMINCDTCGQVTVPEDQLPVVLPTDVVPDGSGNPLNKMPEFYETKCPCCGGDARRETDTLDTFVESSWYYARYASPDFTGGIVKPEAAKNWLPVNQYIGGVEHAILHLLYARFFHKLMHDEGVVQGNEPFTNLLTQGMVLADTFYREAENGKKTWFNPANIELERDEKGRIISAKYSGDGQEVIIGGQEKMSKSKNNGIDPQAIIDQYGADTARVFMMFAAPPDQSLEWSDAGVEGANRFLKRVWRLVASFLEKGNSATAIDKANLSKDAQDLRRKTHETIQKVSDDIERRHAFNTAIAALMELLNASNKFEAKDDNDVAVEREAITTLLTLLAPFAPHLSQTLLAQFGTDLTEATFPEVDASALTRNTQTIVVQVNGKLRGKLEVSVDISKDELLAQAKALPEVQQFLTGPTKKEIVVPNKLVNLVV</sequence>
<proteinExistence type="inferred from homology"/>
<accession>B0VKP9</accession>
<name>SYL_ACIBS</name>